<proteinExistence type="inferred from homology"/>
<comment type="function">
    <text evidence="1">Possesses two activities: a DNA synthesis (polymerase) and an exonucleolytic activity that degrades single-stranded DNA in the 3'- to 5'-direction. Has a template-primer preference which is characteristic of a replicative DNA polymerase (By similarity).</text>
</comment>
<comment type="catalytic activity">
    <reaction evidence="2">
        <text>DNA(n) + a 2'-deoxyribonucleoside 5'-triphosphate = DNA(n+1) + diphosphate</text>
        <dbReference type="Rhea" id="RHEA:22508"/>
        <dbReference type="Rhea" id="RHEA-COMP:17339"/>
        <dbReference type="Rhea" id="RHEA-COMP:17340"/>
        <dbReference type="ChEBI" id="CHEBI:33019"/>
        <dbReference type="ChEBI" id="CHEBI:61560"/>
        <dbReference type="ChEBI" id="CHEBI:173112"/>
        <dbReference type="EC" id="2.7.7.7"/>
    </reaction>
</comment>
<comment type="catalytic activity">
    <reaction evidence="2">
        <text>Exonucleolytic cleavage in the 3'- to 5'-direction to yield nucleoside 5'-phosphates.</text>
        <dbReference type="EC" id="3.1.11.1"/>
    </reaction>
</comment>
<comment type="subunit">
    <text evidence="2">Heterodimer of a large subunit and a small subunit.</text>
</comment>
<comment type="similarity">
    <text evidence="2">Belongs to the archaeal DNA polymerase II family.</text>
</comment>
<evidence type="ECO:0000250" key="1"/>
<evidence type="ECO:0000255" key="2">
    <source>
        <dbReference type="HAMAP-Rule" id="MF_00324"/>
    </source>
</evidence>
<gene>
    <name evidence="2" type="primary">polC</name>
    <name type="ordered locus">Mevan_1196</name>
</gene>
<keyword id="KW-0235">DNA replication</keyword>
<keyword id="KW-0238">DNA-binding</keyword>
<keyword id="KW-0239">DNA-directed DNA polymerase</keyword>
<keyword id="KW-0269">Exonuclease</keyword>
<keyword id="KW-0378">Hydrolase</keyword>
<keyword id="KW-0511">Multifunctional enzyme</keyword>
<keyword id="KW-0540">Nuclease</keyword>
<keyword id="KW-0548">Nucleotidyltransferase</keyword>
<keyword id="KW-0808">Transferase</keyword>
<feature type="chain" id="PRO_1000019391" description="DNA polymerase II large subunit">
    <location>
        <begin position="1"/>
        <end position="1131"/>
    </location>
</feature>
<name>DP2L_METVS</name>
<organism>
    <name type="scientific">Methanococcus vannielii (strain ATCC 35089 / DSM 1224 / JCM 13029 / OCM 148 / SB)</name>
    <dbReference type="NCBI Taxonomy" id="406327"/>
    <lineage>
        <taxon>Archaea</taxon>
        <taxon>Methanobacteriati</taxon>
        <taxon>Methanobacteriota</taxon>
        <taxon>Methanomada group</taxon>
        <taxon>Methanococci</taxon>
        <taxon>Methanococcales</taxon>
        <taxon>Methanococcaceae</taxon>
        <taxon>Methanococcus</taxon>
    </lineage>
</organism>
<sequence>MLHVSASKNMTEYFKSILNDVNNLYFIAEECRKLGYDVVDKVEIPLAKDMADRVEGIVGPPKVSERIRELVMELGKEPAALEIAKEIVEGRFGEFGKEEGAEQAVRTALAVITEGIVAAPLEGIAHVKIKKNHDGTEYLAIYFAGPIRSAGGTAQALAVLVGDYVRKNMNLDKFKPTDDEVERYGEEIDLYQSEVTTFQYQPKIEEIRTAVRNISVEITGEATDDVEVSGHRDLERVETNQIRGGALLALVEGVLLKAPKILRHVDKLEIEGWNWLKELKNKKEEINEDIKDEKEDFNYEEEEDLSQYDDCEIEEVTKFIGEVIAGRPVFAHPSKKGGFRLRYGRSRNTGFATDGFHPAIMYLVDDFMAVGTQLKTERPGKATCVVPVDSIDPPIVKLNNHSVLKIDTVEKAIKYRKDVLEILFLGDILVNYGDFLENNHVMLPSSWCVEWYEKILKVNNIPYSTEFISNPSPKEAVKFAITTKTPLHPVYTYHWHDISKENIYSLRNWILRGNFNKNSDKWEISYDLENPEDISNKRFLELIGCCHEVVDGKIFILEYYPLLYSLGYDYENSFDSVENLEEKVSNAKNNMHLINLLSHFEIRRNTYIYVGARMGRPEKAASRKMKPPVNGLFPIGNAGALVRLINKAVEGGKTDEIEISNVMCSCGKVSLYKKCPFCGKSVIPTGPTRIKLPIKDYWYNALENLKINKPGDVKCIKGMTSKDKIIEPLEKAILRAVNDVYVFKDGTTRFDCTDVPVTHFKPCEINVSVNRLKELGYLRDINGNSLENDKQVLELKVQDVIVPESCMDYFLNVSKFIDDLLEKYYKKNRYYNSSNKEDLVGHLIIGMAPHTSAGMVGRIVGYSKANVGYAHPYFHASKRRNCDGDEDAFFLLLDAFLNFSKKFLPDKRGGQMDAPLVLTTILDPKEVDGEVHNMDSMWEYPLEFYEKSLEMVTPKEIKKLMETVEDRLGKDEQYEGIGYTHETLKIDEGPLICSYKTLGSMMDKTSAQLAVAKKIRATDERDVAEKVIQSHFVPDLIGNLRAFSRQGVRCKCGAKYRRIPLKGVCRKCGSRLILTVSKGAVEKYMNVSQTMAEKYNVSDYIKQRLEIIRSGIDSLFTNDKRKQVKIEDFFK</sequence>
<dbReference type="EC" id="2.7.7.7" evidence="2"/>
<dbReference type="EC" id="3.1.11.1" evidence="2"/>
<dbReference type="EMBL" id="CP000742">
    <property type="protein sequence ID" value="ABR55094.1"/>
    <property type="molecule type" value="Genomic_DNA"/>
</dbReference>
<dbReference type="RefSeq" id="WP_012066009.1">
    <property type="nucleotide sequence ID" value="NC_009634.1"/>
</dbReference>
<dbReference type="SMR" id="A6URH2"/>
<dbReference type="STRING" id="406327.Mevan_1196"/>
<dbReference type="GeneID" id="5325524"/>
<dbReference type="KEGG" id="mvn:Mevan_1196"/>
<dbReference type="eggNOG" id="arCOG04447">
    <property type="taxonomic scope" value="Archaea"/>
</dbReference>
<dbReference type="HOGENOM" id="CLU_001154_0_0_2"/>
<dbReference type="OrthoDB" id="7529at2157"/>
<dbReference type="Proteomes" id="UP000001107">
    <property type="component" value="Chromosome"/>
</dbReference>
<dbReference type="GO" id="GO:0003677">
    <property type="term" value="F:DNA binding"/>
    <property type="evidence" value="ECO:0007669"/>
    <property type="project" value="UniProtKB-UniRule"/>
</dbReference>
<dbReference type="GO" id="GO:0003887">
    <property type="term" value="F:DNA-directed DNA polymerase activity"/>
    <property type="evidence" value="ECO:0007669"/>
    <property type="project" value="UniProtKB-UniRule"/>
</dbReference>
<dbReference type="GO" id="GO:0008310">
    <property type="term" value="F:single-stranded DNA 3'-5' DNA exonuclease activity"/>
    <property type="evidence" value="ECO:0007669"/>
    <property type="project" value="UniProtKB-EC"/>
</dbReference>
<dbReference type="GO" id="GO:0006308">
    <property type="term" value="P:DNA catabolic process"/>
    <property type="evidence" value="ECO:0007669"/>
    <property type="project" value="UniProtKB-UniRule"/>
</dbReference>
<dbReference type="GO" id="GO:0006261">
    <property type="term" value="P:DNA-templated DNA replication"/>
    <property type="evidence" value="ECO:0007669"/>
    <property type="project" value="UniProtKB-UniRule"/>
</dbReference>
<dbReference type="HAMAP" id="MF_00324">
    <property type="entry name" value="DNApol_II_L_arch"/>
    <property type="match status" value="1"/>
</dbReference>
<dbReference type="InterPro" id="IPR004475">
    <property type="entry name" value="PolC_DP2"/>
</dbReference>
<dbReference type="InterPro" id="IPR056172">
    <property type="entry name" value="PolC_DP2_cat_dom"/>
</dbReference>
<dbReference type="InterPro" id="IPR056171">
    <property type="entry name" value="PolC_DP2_central_dom"/>
</dbReference>
<dbReference type="InterPro" id="IPR016033">
    <property type="entry name" value="PolC_DP2_N"/>
</dbReference>
<dbReference type="NCBIfam" id="TIGR00354">
    <property type="entry name" value="polC"/>
    <property type="match status" value="1"/>
</dbReference>
<dbReference type="NCBIfam" id="NF003103">
    <property type="entry name" value="PRK04023.1"/>
    <property type="match status" value="1"/>
</dbReference>
<dbReference type="PANTHER" id="PTHR42210">
    <property type="entry name" value="DNA POLYMERASE II LARGE SUBUNIT"/>
    <property type="match status" value="1"/>
</dbReference>
<dbReference type="PANTHER" id="PTHR42210:SF1">
    <property type="entry name" value="DNA POLYMERASE II LARGE SUBUNIT"/>
    <property type="match status" value="1"/>
</dbReference>
<dbReference type="Pfam" id="PF24846">
    <property type="entry name" value="PolC_DP2_cat"/>
    <property type="match status" value="1"/>
</dbReference>
<dbReference type="Pfam" id="PF24844">
    <property type="entry name" value="PolC_DP2_central"/>
    <property type="match status" value="1"/>
</dbReference>
<dbReference type="Pfam" id="PF03833">
    <property type="entry name" value="PolC_DP2_N"/>
    <property type="match status" value="1"/>
</dbReference>
<dbReference type="PIRSF" id="PIRSF016275">
    <property type="entry name" value="PolC_DP2"/>
    <property type="match status" value="1"/>
</dbReference>
<reference key="1">
    <citation type="submission" date="2007-06" db="EMBL/GenBank/DDBJ databases">
        <title>Complete sequence of Methanococcus vannielii SB.</title>
        <authorList>
            <consortium name="US DOE Joint Genome Institute"/>
            <person name="Copeland A."/>
            <person name="Lucas S."/>
            <person name="Lapidus A."/>
            <person name="Barry K."/>
            <person name="Glavina del Rio T."/>
            <person name="Dalin E."/>
            <person name="Tice H."/>
            <person name="Pitluck S."/>
            <person name="Chain P."/>
            <person name="Malfatti S."/>
            <person name="Shin M."/>
            <person name="Vergez L."/>
            <person name="Schmutz J."/>
            <person name="Larimer F."/>
            <person name="Land M."/>
            <person name="Hauser L."/>
            <person name="Kyrpides N."/>
            <person name="Anderson I."/>
            <person name="Sieprawska-Lupa M."/>
            <person name="Whitman W.B."/>
            <person name="Richardson P."/>
        </authorList>
    </citation>
    <scope>NUCLEOTIDE SEQUENCE [LARGE SCALE GENOMIC DNA]</scope>
    <source>
        <strain>ATCC 35089 / DSM 1224 / JCM 13029 / OCM 148 / SB</strain>
    </source>
</reference>
<protein>
    <recommendedName>
        <fullName evidence="2">DNA polymerase II large subunit</fullName>
        <shortName evidence="2">Pol II</shortName>
        <ecNumber evidence="2">2.7.7.7</ecNumber>
    </recommendedName>
    <alternativeName>
        <fullName evidence="2">Exodeoxyribonuclease large subunit</fullName>
        <ecNumber evidence="2">3.1.11.1</ecNumber>
    </alternativeName>
</protein>
<accession>A6URH2</accession>